<name>PXDC1_BOVIN</name>
<sequence>MASAVFEGTSLVNMFVRGCWVNGIRRLVVSRRGDEEEFFEIRTEWSDRSVLYLHRSLADLGRLWQRLRDAFPEDRPELVRAPLRQGLIAIKDAHDIETRLNEVEKLLKAIISMPRKYSRSEVVLTFFERSPLDQVLKNDNVHKIQCGFQSPVKISEIMRSNGFCLANTETIVIDHSIPNGKDQHGAVDPAEHLFEGGGELPAELEDGDDPAAYVTNLSYYHLVPFETDILD</sequence>
<feature type="chain" id="PRO_0000297572" description="PX domain-containing protein 1">
    <location>
        <begin position="1"/>
        <end position="231"/>
    </location>
</feature>
<feature type="domain" description="PX">
    <location>
        <begin position="1"/>
        <end position="134"/>
    </location>
</feature>
<reference key="1">
    <citation type="submission" date="2006-09" db="EMBL/GenBank/DDBJ databases">
        <authorList>
            <consortium name="NIH - Mammalian Gene Collection (MGC) project"/>
        </authorList>
    </citation>
    <scope>NUCLEOTIDE SEQUENCE [LARGE SCALE MRNA]</scope>
    <source>
        <strain>Hereford</strain>
        <tissue>Fetal skin</tissue>
    </source>
</reference>
<gene>
    <name type="primary">PXDC1</name>
</gene>
<dbReference type="EMBL" id="BC123889">
    <property type="protein sequence ID" value="AAI23890.1"/>
    <property type="molecule type" value="mRNA"/>
</dbReference>
<dbReference type="RefSeq" id="NP_001070400.1">
    <property type="nucleotide sequence ID" value="NM_001076932.1"/>
</dbReference>
<dbReference type="SMR" id="Q08D85"/>
<dbReference type="FunCoup" id="Q08D85">
    <property type="interactions" value="115"/>
</dbReference>
<dbReference type="STRING" id="9913.ENSBTAP00000049275"/>
<dbReference type="PaxDb" id="9913-ENSBTAP00000049275"/>
<dbReference type="Ensembl" id="ENSBTAT00000053185.4">
    <property type="protein sequence ID" value="ENSBTAP00000049275.3"/>
    <property type="gene ID" value="ENSBTAG00000026919.6"/>
</dbReference>
<dbReference type="GeneID" id="613986"/>
<dbReference type="KEGG" id="bta:613986"/>
<dbReference type="CTD" id="221749"/>
<dbReference type="VEuPathDB" id="HostDB:ENSBTAG00000026919"/>
<dbReference type="VGNC" id="VGNC:33582">
    <property type="gene designation" value="PXDC1"/>
</dbReference>
<dbReference type="eggNOG" id="ENOG502QQ4P">
    <property type="taxonomic scope" value="Eukaryota"/>
</dbReference>
<dbReference type="GeneTree" id="ENSGT00390000009209"/>
<dbReference type="InParanoid" id="Q08D85"/>
<dbReference type="OMA" id="ISMPWKY"/>
<dbReference type="OrthoDB" id="9933228at2759"/>
<dbReference type="Proteomes" id="UP000009136">
    <property type="component" value="Chromosome 23"/>
</dbReference>
<dbReference type="Bgee" id="ENSBTAG00000026919">
    <property type="expression patterns" value="Expressed in placenta and 104 other cell types or tissues"/>
</dbReference>
<dbReference type="GO" id="GO:0035091">
    <property type="term" value="F:phosphatidylinositol binding"/>
    <property type="evidence" value="ECO:0007669"/>
    <property type="project" value="InterPro"/>
</dbReference>
<dbReference type="Gene3D" id="3.30.1520.10">
    <property type="entry name" value="Phox-like domain"/>
    <property type="match status" value="1"/>
</dbReference>
<dbReference type="InterPro" id="IPR036871">
    <property type="entry name" value="PX_dom_sf"/>
</dbReference>
<dbReference type="InterPro" id="IPR040288">
    <property type="entry name" value="PXDC1"/>
</dbReference>
<dbReference type="PANTHER" id="PTHR31433">
    <property type="entry name" value="PX DOMAIN-CONTAINING PROTEIN 1"/>
    <property type="match status" value="1"/>
</dbReference>
<dbReference type="PANTHER" id="PTHR31433:SF0">
    <property type="entry name" value="PX DOMAIN-CONTAINING PROTEIN 1"/>
    <property type="match status" value="1"/>
</dbReference>
<dbReference type="SUPFAM" id="SSF64268">
    <property type="entry name" value="PX domain"/>
    <property type="match status" value="1"/>
</dbReference>
<organism>
    <name type="scientific">Bos taurus</name>
    <name type="common">Bovine</name>
    <dbReference type="NCBI Taxonomy" id="9913"/>
    <lineage>
        <taxon>Eukaryota</taxon>
        <taxon>Metazoa</taxon>
        <taxon>Chordata</taxon>
        <taxon>Craniata</taxon>
        <taxon>Vertebrata</taxon>
        <taxon>Euteleostomi</taxon>
        <taxon>Mammalia</taxon>
        <taxon>Eutheria</taxon>
        <taxon>Laurasiatheria</taxon>
        <taxon>Artiodactyla</taxon>
        <taxon>Ruminantia</taxon>
        <taxon>Pecora</taxon>
        <taxon>Bovidae</taxon>
        <taxon>Bovinae</taxon>
        <taxon>Bos</taxon>
    </lineage>
</organism>
<proteinExistence type="evidence at transcript level"/>
<keyword id="KW-1185">Reference proteome</keyword>
<protein>
    <recommendedName>
        <fullName>PX domain-containing protein 1</fullName>
    </recommendedName>
</protein>
<accession>Q08D85</accession>